<organism>
    <name type="scientific">Staphylococcus aureus (strain COL)</name>
    <dbReference type="NCBI Taxonomy" id="93062"/>
    <lineage>
        <taxon>Bacteria</taxon>
        <taxon>Bacillati</taxon>
        <taxon>Bacillota</taxon>
        <taxon>Bacilli</taxon>
        <taxon>Bacillales</taxon>
        <taxon>Staphylococcaceae</taxon>
        <taxon>Staphylococcus</taxon>
    </lineage>
</organism>
<feature type="chain" id="PRO_0000082896" description="Peptide deformylase-like">
    <location>
        <begin position="1"/>
        <end position="162"/>
    </location>
</feature>
<gene>
    <name type="ordered locus">SACOL1227</name>
</gene>
<dbReference type="EMBL" id="CP000046">
    <property type="protein sequence ID" value="AAW38064.1"/>
    <property type="molecule type" value="Genomic_DNA"/>
</dbReference>
<dbReference type="RefSeq" id="WP_000985293.1">
    <property type="nucleotide sequence ID" value="NZ_JBGOFO010000002.1"/>
</dbReference>
<dbReference type="SMR" id="Q5HGL7"/>
<dbReference type="KEGG" id="sac:SACOL1227"/>
<dbReference type="HOGENOM" id="CLU_061901_4_1_9"/>
<dbReference type="Proteomes" id="UP000000530">
    <property type="component" value="Chromosome"/>
</dbReference>
<dbReference type="GO" id="GO:0042586">
    <property type="term" value="F:peptide deformylase activity"/>
    <property type="evidence" value="ECO:0007669"/>
    <property type="project" value="UniProtKB-UniRule"/>
</dbReference>
<dbReference type="GO" id="GO:0043686">
    <property type="term" value="P:co-translational protein modification"/>
    <property type="evidence" value="ECO:0007669"/>
    <property type="project" value="TreeGrafter"/>
</dbReference>
<dbReference type="GO" id="GO:0006412">
    <property type="term" value="P:translation"/>
    <property type="evidence" value="ECO:0007669"/>
    <property type="project" value="UniProtKB-UniRule"/>
</dbReference>
<dbReference type="CDD" id="cd00487">
    <property type="entry name" value="Pep_deformylase"/>
    <property type="match status" value="1"/>
</dbReference>
<dbReference type="FunFam" id="3.90.45.10:FF:000010">
    <property type="entry name" value="Peptide deformylase"/>
    <property type="match status" value="1"/>
</dbReference>
<dbReference type="Gene3D" id="3.90.45.10">
    <property type="entry name" value="Peptide deformylase"/>
    <property type="match status" value="1"/>
</dbReference>
<dbReference type="HAMAP" id="MF_00163">
    <property type="entry name" value="Pep_deformylase"/>
    <property type="match status" value="1"/>
</dbReference>
<dbReference type="InterPro" id="IPR023635">
    <property type="entry name" value="Peptide_deformylase"/>
</dbReference>
<dbReference type="InterPro" id="IPR036821">
    <property type="entry name" value="Peptide_deformylase_sf"/>
</dbReference>
<dbReference type="NCBIfam" id="TIGR00079">
    <property type="entry name" value="pept_deformyl"/>
    <property type="match status" value="1"/>
</dbReference>
<dbReference type="NCBIfam" id="NF011189">
    <property type="entry name" value="PRK14595.1"/>
    <property type="match status" value="1"/>
</dbReference>
<dbReference type="PANTHER" id="PTHR10458">
    <property type="entry name" value="PEPTIDE DEFORMYLASE"/>
    <property type="match status" value="1"/>
</dbReference>
<dbReference type="PANTHER" id="PTHR10458:SF22">
    <property type="entry name" value="PEPTIDE DEFORMYLASE"/>
    <property type="match status" value="1"/>
</dbReference>
<dbReference type="Pfam" id="PF01327">
    <property type="entry name" value="Pep_deformylase"/>
    <property type="match status" value="1"/>
</dbReference>
<dbReference type="PIRSF" id="PIRSF004749">
    <property type="entry name" value="Pep_def"/>
    <property type="match status" value="1"/>
</dbReference>
<dbReference type="PRINTS" id="PR01576">
    <property type="entry name" value="PDEFORMYLASE"/>
</dbReference>
<dbReference type="SUPFAM" id="SSF56420">
    <property type="entry name" value="Peptide deformylase"/>
    <property type="match status" value="1"/>
</dbReference>
<accession>Q5HGL7</accession>
<protein>
    <recommendedName>
        <fullName evidence="1">Peptide deformylase-like</fullName>
    </recommendedName>
    <alternativeName>
        <fullName evidence="1">Polypeptide deformylase-like</fullName>
    </alternativeName>
</protein>
<evidence type="ECO:0000255" key="1">
    <source>
        <dbReference type="HAMAP-Rule" id="MF_00163"/>
    </source>
</evidence>
<proteinExistence type="inferred from homology"/>
<sequence length="162" mass="18102">MAIKKLVPASHPILTKKAQAVKTFDDSLKRLLQDLEDTMYAQEAAGLCAPQINQSLQVAIIDMEMEGLLQLVNPKIISQSNETITDLEGSITLPDVYGEVTRSKMIVVESYDVNGNKVELTAHEDVARMILHIIDQMNGIPFTERADRILTDKEVEAYFIND</sequence>
<reference key="1">
    <citation type="journal article" date="2005" name="J. Bacteriol.">
        <title>Insights on evolution of virulence and resistance from the complete genome analysis of an early methicillin-resistant Staphylococcus aureus strain and a biofilm-producing methicillin-resistant Staphylococcus epidermidis strain.</title>
        <authorList>
            <person name="Gill S.R."/>
            <person name="Fouts D.E."/>
            <person name="Archer G.L."/>
            <person name="Mongodin E.F."/>
            <person name="DeBoy R.T."/>
            <person name="Ravel J."/>
            <person name="Paulsen I.T."/>
            <person name="Kolonay J.F."/>
            <person name="Brinkac L.M."/>
            <person name="Beanan M.J."/>
            <person name="Dodson R.J."/>
            <person name="Daugherty S.C."/>
            <person name="Madupu R."/>
            <person name="Angiuoli S.V."/>
            <person name="Durkin A.S."/>
            <person name="Haft D.H."/>
            <person name="Vamathevan J.J."/>
            <person name="Khouri H."/>
            <person name="Utterback T.R."/>
            <person name="Lee C."/>
            <person name="Dimitrov G."/>
            <person name="Jiang L."/>
            <person name="Qin H."/>
            <person name="Weidman J."/>
            <person name="Tran K."/>
            <person name="Kang K.H."/>
            <person name="Hance I.R."/>
            <person name="Nelson K.E."/>
            <person name="Fraser C.M."/>
        </authorList>
    </citation>
    <scope>NUCLEOTIDE SEQUENCE [LARGE SCALE GENOMIC DNA]</scope>
    <source>
        <strain>COL</strain>
    </source>
</reference>
<comment type="similarity">
    <text evidence="1">Belongs to the polypeptide deformylase family.</text>
</comment>
<name>DEFL_STAAC</name>